<feature type="chain" id="PRO_1000043253" description="Pantothenate kinase">
    <location>
        <begin position="1"/>
        <end position="316"/>
    </location>
</feature>
<feature type="binding site" evidence="1">
    <location>
        <begin position="95"/>
        <end position="102"/>
    </location>
    <ligand>
        <name>ATP</name>
        <dbReference type="ChEBI" id="CHEBI:30616"/>
    </ligand>
</feature>
<protein>
    <recommendedName>
        <fullName evidence="1">Pantothenate kinase</fullName>
        <ecNumber evidence="1">2.7.1.33</ecNumber>
    </recommendedName>
    <alternativeName>
        <fullName evidence="1">Pantothenic acid kinase</fullName>
    </alternativeName>
</protein>
<organism>
    <name type="scientific">Shewanella sp. (strain ANA-3)</name>
    <dbReference type="NCBI Taxonomy" id="94122"/>
    <lineage>
        <taxon>Bacteria</taxon>
        <taxon>Pseudomonadati</taxon>
        <taxon>Pseudomonadota</taxon>
        <taxon>Gammaproteobacteria</taxon>
        <taxon>Alteromonadales</taxon>
        <taxon>Shewanellaceae</taxon>
        <taxon>Shewanella</taxon>
    </lineage>
</organism>
<comment type="catalytic activity">
    <reaction evidence="1">
        <text>(R)-pantothenate + ATP = (R)-4'-phosphopantothenate + ADP + H(+)</text>
        <dbReference type="Rhea" id="RHEA:16373"/>
        <dbReference type="ChEBI" id="CHEBI:10986"/>
        <dbReference type="ChEBI" id="CHEBI:15378"/>
        <dbReference type="ChEBI" id="CHEBI:29032"/>
        <dbReference type="ChEBI" id="CHEBI:30616"/>
        <dbReference type="ChEBI" id="CHEBI:456216"/>
        <dbReference type="EC" id="2.7.1.33"/>
    </reaction>
</comment>
<comment type="pathway">
    <text evidence="1">Cofactor biosynthesis; coenzyme A biosynthesis; CoA from (R)-pantothenate: step 1/5.</text>
</comment>
<comment type="subcellular location">
    <subcellularLocation>
        <location evidence="1">Cytoplasm</location>
    </subcellularLocation>
</comment>
<comment type="similarity">
    <text evidence="1">Belongs to the prokaryotic pantothenate kinase family.</text>
</comment>
<reference key="1">
    <citation type="submission" date="2006-09" db="EMBL/GenBank/DDBJ databases">
        <title>Complete sequence of chromosome 1 of Shewanella sp. ANA-3.</title>
        <authorList>
            <person name="Copeland A."/>
            <person name="Lucas S."/>
            <person name="Lapidus A."/>
            <person name="Barry K."/>
            <person name="Detter J.C."/>
            <person name="Glavina del Rio T."/>
            <person name="Hammon N."/>
            <person name="Israni S."/>
            <person name="Dalin E."/>
            <person name="Tice H."/>
            <person name="Pitluck S."/>
            <person name="Chertkov O."/>
            <person name="Brettin T."/>
            <person name="Bruce D."/>
            <person name="Han C."/>
            <person name="Tapia R."/>
            <person name="Gilna P."/>
            <person name="Schmutz J."/>
            <person name="Larimer F."/>
            <person name="Land M."/>
            <person name="Hauser L."/>
            <person name="Kyrpides N."/>
            <person name="Kim E."/>
            <person name="Newman D."/>
            <person name="Salticov C."/>
            <person name="Konstantinidis K."/>
            <person name="Klappenback J."/>
            <person name="Tiedje J."/>
            <person name="Richardson P."/>
        </authorList>
    </citation>
    <scope>NUCLEOTIDE SEQUENCE [LARGE SCALE GENOMIC DNA]</scope>
    <source>
        <strain>ANA-3</strain>
    </source>
</reference>
<proteinExistence type="inferred from homology"/>
<evidence type="ECO:0000255" key="1">
    <source>
        <dbReference type="HAMAP-Rule" id="MF_00215"/>
    </source>
</evidence>
<sequence>MTSKNPIQKALYLAFERAQWSVLRDAVPMTLSEQDLENLRGINEKVSLSEVTDIYLPLSRLLNLIVKSKQQRGLVLDEFLGQKPSSSPYIISIAGSVAVGKSTTARILQALLRHWPEHPKVDLVTTDGFLYPLADLKRKGLLQRKGFPESYDMKMLVEFISAVKSGQAHVNAPIYSHVTYDRIRGQHQTVSQPDILILEGLNVLQTGLDSPVDIRRPFVSDFVDFSIYVDAEEHLLKQWYQERFLQFRKGAFSDEKSYFHHYASLTDDEANAIAAKIWDTINGPNLQLNIQPTRERAHLILQKGQDHLMSHVLLRK</sequence>
<accession>A0KRK9</accession>
<keyword id="KW-0067">ATP-binding</keyword>
<keyword id="KW-0173">Coenzyme A biosynthesis</keyword>
<keyword id="KW-0963">Cytoplasm</keyword>
<keyword id="KW-0418">Kinase</keyword>
<keyword id="KW-0547">Nucleotide-binding</keyword>
<keyword id="KW-0808">Transferase</keyword>
<dbReference type="EC" id="2.7.1.33" evidence="1"/>
<dbReference type="EMBL" id="CP000469">
    <property type="protein sequence ID" value="ABK46428.1"/>
    <property type="molecule type" value="Genomic_DNA"/>
</dbReference>
<dbReference type="RefSeq" id="WP_011715453.1">
    <property type="nucleotide sequence ID" value="NC_008577.1"/>
</dbReference>
<dbReference type="SMR" id="A0KRK9"/>
<dbReference type="STRING" id="94122.Shewana3_0184"/>
<dbReference type="KEGG" id="shn:Shewana3_0184"/>
<dbReference type="eggNOG" id="COG1072">
    <property type="taxonomic scope" value="Bacteria"/>
</dbReference>
<dbReference type="HOGENOM" id="CLU_053818_1_1_6"/>
<dbReference type="OrthoDB" id="1550976at2"/>
<dbReference type="UniPathway" id="UPA00241">
    <property type="reaction ID" value="UER00352"/>
</dbReference>
<dbReference type="Proteomes" id="UP000002589">
    <property type="component" value="Chromosome"/>
</dbReference>
<dbReference type="GO" id="GO:0005737">
    <property type="term" value="C:cytoplasm"/>
    <property type="evidence" value="ECO:0007669"/>
    <property type="project" value="UniProtKB-SubCell"/>
</dbReference>
<dbReference type="GO" id="GO:0005524">
    <property type="term" value="F:ATP binding"/>
    <property type="evidence" value="ECO:0007669"/>
    <property type="project" value="UniProtKB-UniRule"/>
</dbReference>
<dbReference type="GO" id="GO:0004594">
    <property type="term" value="F:pantothenate kinase activity"/>
    <property type="evidence" value="ECO:0007669"/>
    <property type="project" value="UniProtKB-UniRule"/>
</dbReference>
<dbReference type="GO" id="GO:0015937">
    <property type="term" value="P:coenzyme A biosynthetic process"/>
    <property type="evidence" value="ECO:0007669"/>
    <property type="project" value="UniProtKB-UniRule"/>
</dbReference>
<dbReference type="CDD" id="cd02025">
    <property type="entry name" value="PanK"/>
    <property type="match status" value="1"/>
</dbReference>
<dbReference type="FunFam" id="3.40.50.300:FF:000242">
    <property type="entry name" value="Pantothenate kinase"/>
    <property type="match status" value="1"/>
</dbReference>
<dbReference type="Gene3D" id="3.40.50.300">
    <property type="entry name" value="P-loop containing nucleotide triphosphate hydrolases"/>
    <property type="match status" value="1"/>
</dbReference>
<dbReference type="HAMAP" id="MF_00215">
    <property type="entry name" value="Pantothen_kinase_1"/>
    <property type="match status" value="1"/>
</dbReference>
<dbReference type="InterPro" id="IPR027417">
    <property type="entry name" value="P-loop_NTPase"/>
</dbReference>
<dbReference type="InterPro" id="IPR004566">
    <property type="entry name" value="PanK"/>
</dbReference>
<dbReference type="InterPro" id="IPR006083">
    <property type="entry name" value="PRK/URK"/>
</dbReference>
<dbReference type="NCBIfam" id="TIGR00554">
    <property type="entry name" value="panK_bact"/>
    <property type="match status" value="1"/>
</dbReference>
<dbReference type="PANTHER" id="PTHR10285">
    <property type="entry name" value="URIDINE KINASE"/>
    <property type="match status" value="1"/>
</dbReference>
<dbReference type="Pfam" id="PF00485">
    <property type="entry name" value="PRK"/>
    <property type="match status" value="1"/>
</dbReference>
<dbReference type="PIRSF" id="PIRSF000545">
    <property type="entry name" value="Pantothenate_kin"/>
    <property type="match status" value="1"/>
</dbReference>
<dbReference type="SUPFAM" id="SSF52540">
    <property type="entry name" value="P-loop containing nucleoside triphosphate hydrolases"/>
    <property type="match status" value="1"/>
</dbReference>
<gene>
    <name evidence="1" type="primary">coaA</name>
    <name type="ordered locus">Shewana3_0184</name>
</gene>
<name>COAA_SHESA</name>